<proteinExistence type="inferred from homology"/>
<comment type="subcellular location">
    <subcellularLocation>
        <location evidence="1">Cell membrane</location>
        <topology evidence="1">Multi-pass membrane protein</topology>
    </subcellularLocation>
</comment>
<comment type="similarity">
    <text evidence="1">Belongs to the UPF0391 family.</text>
</comment>
<name>YTJA_ECOSM</name>
<feature type="chain" id="PRO_1000143712" description="UPF0391 membrane protein YtjA">
    <location>
        <begin position="1"/>
        <end position="53"/>
    </location>
</feature>
<feature type="transmembrane region" description="Helical" evidence="1">
    <location>
        <begin position="4"/>
        <end position="24"/>
    </location>
</feature>
<feature type="transmembrane region" description="Helical" evidence="1">
    <location>
        <begin position="30"/>
        <end position="48"/>
    </location>
</feature>
<reference key="1">
    <citation type="journal article" date="2008" name="J. Bacteriol.">
        <title>Insights into the environmental resistance gene pool from the genome sequence of the multidrug-resistant environmental isolate Escherichia coli SMS-3-5.</title>
        <authorList>
            <person name="Fricke W.F."/>
            <person name="Wright M.S."/>
            <person name="Lindell A.H."/>
            <person name="Harkins D.M."/>
            <person name="Baker-Austin C."/>
            <person name="Ravel J."/>
            <person name="Stepanauskas R."/>
        </authorList>
    </citation>
    <scope>NUCLEOTIDE SEQUENCE [LARGE SCALE GENOMIC DNA]</scope>
    <source>
        <strain>SMS-3-5 / SECEC</strain>
    </source>
</reference>
<dbReference type="EMBL" id="CP000970">
    <property type="protein sequence ID" value="ACB16720.1"/>
    <property type="molecule type" value="Genomic_DNA"/>
</dbReference>
<dbReference type="RefSeq" id="WP_000490275.1">
    <property type="nucleotide sequence ID" value="NC_010498.1"/>
</dbReference>
<dbReference type="KEGG" id="ecm:EcSMS35_4924"/>
<dbReference type="HOGENOM" id="CLU_187346_2_0_6"/>
<dbReference type="Proteomes" id="UP000007011">
    <property type="component" value="Chromosome"/>
</dbReference>
<dbReference type="GO" id="GO:0005886">
    <property type="term" value="C:plasma membrane"/>
    <property type="evidence" value="ECO:0007669"/>
    <property type="project" value="UniProtKB-SubCell"/>
</dbReference>
<dbReference type="HAMAP" id="MF_01361">
    <property type="entry name" value="UPF0391"/>
    <property type="match status" value="1"/>
</dbReference>
<dbReference type="InterPro" id="IPR009760">
    <property type="entry name" value="DUF1328"/>
</dbReference>
<dbReference type="NCBIfam" id="NF010229">
    <property type="entry name" value="PRK13682.1-4"/>
    <property type="match status" value="1"/>
</dbReference>
<dbReference type="NCBIfam" id="NF010230">
    <property type="entry name" value="PRK13682.1-5"/>
    <property type="match status" value="1"/>
</dbReference>
<dbReference type="Pfam" id="PF07043">
    <property type="entry name" value="DUF1328"/>
    <property type="match status" value="1"/>
</dbReference>
<dbReference type="PIRSF" id="PIRSF036466">
    <property type="entry name" value="UCP036466"/>
    <property type="match status" value="1"/>
</dbReference>
<evidence type="ECO:0000255" key="1">
    <source>
        <dbReference type="HAMAP-Rule" id="MF_01361"/>
    </source>
</evidence>
<organism>
    <name type="scientific">Escherichia coli (strain SMS-3-5 / SECEC)</name>
    <dbReference type="NCBI Taxonomy" id="439855"/>
    <lineage>
        <taxon>Bacteria</taxon>
        <taxon>Pseudomonadati</taxon>
        <taxon>Pseudomonadota</taxon>
        <taxon>Gammaproteobacteria</taxon>
        <taxon>Enterobacterales</taxon>
        <taxon>Enterobacteriaceae</taxon>
        <taxon>Escherichia</taxon>
    </lineage>
</organism>
<sequence>MFRWGIIFLVIALIAAALGFGGLAGTAAGAAKIVFVVGIILFLVSLFMGRKRP</sequence>
<accession>B1LEI0</accession>
<protein>
    <recommendedName>
        <fullName evidence="1">UPF0391 membrane protein YtjA</fullName>
    </recommendedName>
</protein>
<keyword id="KW-1003">Cell membrane</keyword>
<keyword id="KW-0472">Membrane</keyword>
<keyword id="KW-0812">Transmembrane</keyword>
<keyword id="KW-1133">Transmembrane helix</keyword>
<gene>
    <name evidence="1" type="primary">ytjA</name>
    <name type="ordered locus">EcSMS35_4924</name>
</gene>